<evidence type="ECO:0000255" key="1">
    <source>
        <dbReference type="HAMAP-Rule" id="MF_00673"/>
    </source>
</evidence>
<proteinExistence type="inferred from homology"/>
<reference key="1">
    <citation type="submission" date="2007-06" db="EMBL/GenBank/DDBJ databases">
        <title>Complete sequence of Methanococcus aeolicus Nankai-3.</title>
        <authorList>
            <consortium name="US DOE Joint Genome Institute"/>
            <person name="Copeland A."/>
            <person name="Lucas S."/>
            <person name="Lapidus A."/>
            <person name="Barry K."/>
            <person name="Glavina del Rio T."/>
            <person name="Dalin E."/>
            <person name="Tice H."/>
            <person name="Pitluck S."/>
            <person name="Chain P."/>
            <person name="Malfatti S."/>
            <person name="Shin M."/>
            <person name="Vergez L."/>
            <person name="Schmutz J."/>
            <person name="Larimer F."/>
            <person name="Land M."/>
            <person name="Hauser L."/>
            <person name="Kyrpides N."/>
            <person name="Lykidis A."/>
            <person name="Sieprawska-Lupa M."/>
            <person name="Whitman W.B."/>
            <person name="Richardson P."/>
        </authorList>
    </citation>
    <scope>NUCLEOTIDE SEQUENCE [LARGE SCALE GENOMIC DNA]</scope>
    <source>
        <strain>ATCC BAA-1280 / DSM 17508 / OCM 812 / Nankai-3</strain>
    </source>
</reference>
<dbReference type="EMBL" id="CP000743">
    <property type="protein sequence ID" value="ABR56252.1"/>
    <property type="molecule type" value="Genomic_DNA"/>
</dbReference>
<dbReference type="RefSeq" id="WP_011973384.1">
    <property type="nucleotide sequence ID" value="NC_009635.1"/>
</dbReference>
<dbReference type="SMR" id="A6UUT0"/>
<dbReference type="STRING" id="419665.Maeo_0668"/>
<dbReference type="GeneID" id="5326539"/>
<dbReference type="KEGG" id="mae:Maeo_0668"/>
<dbReference type="eggNOG" id="arCOG04865">
    <property type="taxonomic scope" value="Archaea"/>
</dbReference>
<dbReference type="HOGENOM" id="CLU_1451416_0_0_2"/>
<dbReference type="OrthoDB" id="59686at2157"/>
<dbReference type="Proteomes" id="UP000001106">
    <property type="component" value="Chromosome"/>
</dbReference>
<dbReference type="HAMAP" id="MF_00673">
    <property type="entry name" value="UPF0254"/>
    <property type="match status" value="1"/>
</dbReference>
<dbReference type="InterPro" id="IPR009625">
    <property type="entry name" value="HcgF"/>
</dbReference>
<dbReference type="NCBIfam" id="NF002122">
    <property type="entry name" value="PRK00962.1"/>
    <property type="match status" value="1"/>
</dbReference>
<dbReference type="Pfam" id="PF06787">
    <property type="entry name" value="HcgF"/>
    <property type="match status" value="1"/>
</dbReference>
<comment type="similarity">
    <text evidence="1">Belongs to the UPF0254 family.</text>
</comment>
<feature type="chain" id="PRO_1000147673" description="UPF0254 protein Maeo_0668">
    <location>
        <begin position="1"/>
        <end position="166"/>
    </location>
</feature>
<accession>A6UUT0</accession>
<protein>
    <recommendedName>
        <fullName evidence="1">UPF0254 protein Maeo_0668</fullName>
    </recommendedName>
</protein>
<organism>
    <name type="scientific">Methanococcus aeolicus (strain ATCC BAA-1280 / DSM 17508 / OCM 812 / Nankai-3)</name>
    <dbReference type="NCBI Taxonomy" id="419665"/>
    <lineage>
        <taxon>Archaea</taxon>
        <taxon>Methanobacteriati</taxon>
        <taxon>Methanobacteriota</taxon>
        <taxon>Methanomada group</taxon>
        <taxon>Methanococci</taxon>
        <taxon>Methanococcales</taxon>
        <taxon>Methanococcaceae</taxon>
        <taxon>Methanococcus</taxon>
    </lineage>
</organism>
<name>Y668_META3</name>
<sequence length="166" mass="18402">MITVATAECFTLGKIGTTIHKIASGYEECKNHRYYNIINGNVKIISSSFIPSIEGAEKLLNLGAPLPKCDYEYSYSKAYTEKNDLKVAHILAKGLKNSLNCNIAIATTAGVGRGGICIISDKNEYLFTTDIEGDLISKKNIIQRQKNGIDKTINKFVEILKKEYFL</sequence>
<gene>
    <name type="ordered locus">Maeo_0668</name>
</gene>